<organism>
    <name type="scientific">Crocosphaera subtropica (strain ATCC 51142 / BH68)</name>
    <name type="common">Cyanothece sp. (strain ATCC 51142)</name>
    <dbReference type="NCBI Taxonomy" id="43989"/>
    <lineage>
        <taxon>Bacteria</taxon>
        <taxon>Bacillati</taxon>
        <taxon>Cyanobacteriota</taxon>
        <taxon>Cyanophyceae</taxon>
        <taxon>Oscillatoriophycideae</taxon>
        <taxon>Chroococcales</taxon>
        <taxon>Aphanothecaceae</taxon>
        <taxon>Crocosphaera</taxon>
        <taxon>Crocosphaera subtropica</taxon>
    </lineage>
</organism>
<protein>
    <recommendedName>
        <fullName evidence="1">Large ribosomal subunit protein uL13</fullName>
    </recommendedName>
    <alternativeName>
        <fullName evidence="3">50S ribosomal protein L13</fullName>
    </alternativeName>
</protein>
<sequence length="151" mass="17044">MTKTITPSSQGLDQKWYVIDATDQRLGRLACEVAKILRGKNKPTYTPHMDTGDFVIIINADKVAVTGRKSTQKLYRRHSGRPGGMKIETFEKLQQRIPERIIEKAVKGMLPKNALGRQLFTKLKVYPGPNHPHQAQKPEELTLNTIPNGDK</sequence>
<keyword id="KW-1185">Reference proteome</keyword>
<keyword id="KW-0687">Ribonucleoprotein</keyword>
<keyword id="KW-0689">Ribosomal protein</keyword>
<evidence type="ECO:0000255" key="1">
    <source>
        <dbReference type="HAMAP-Rule" id="MF_01366"/>
    </source>
</evidence>
<evidence type="ECO:0000256" key="2">
    <source>
        <dbReference type="SAM" id="MobiDB-lite"/>
    </source>
</evidence>
<evidence type="ECO:0000305" key="3"/>
<accession>B1WQT8</accession>
<reference key="1">
    <citation type="journal article" date="2008" name="Proc. Natl. Acad. Sci. U.S.A.">
        <title>The genome of Cyanothece 51142, a unicellular diazotrophic cyanobacterium important in the marine nitrogen cycle.</title>
        <authorList>
            <person name="Welsh E.A."/>
            <person name="Liberton M."/>
            <person name="Stoeckel J."/>
            <person name="Loh T."/>
            <person name="Elvitigala T."/>
            <person name="Wang C."/>
            <person name="Wollam A."/>
            <person name="Fulton R.S."/>
            <person name="Clifton S.W."/>
            <person name="Jacobs J.M."/>
            <person name="Aurora R."/>
            <person name="Ghosh B.K."/>
            <person name="Sherman L.A."/>
            <person name="Smith R.D."/>
            <person name="Wilson R.K."/>
            <person name="Pakrasi H.B."/>
        </authorList>
    </citation>
    <scope>NUCLEOTIDE SEQUENCE [LARGE SCALE GENOMIC DNA]</scope>
    <source>
        <strain>ATCC 51142 / BH68</strain>
    </source>
</reference>
<proteinExistence type="inferred from homology"/>
<name>RL13_CROS5</name>
<dbReference type="EMBL" id="CP000806">
    <property type="protein sequence ID" value="ACB53390.1"/>
    <property type="molecule type" value="Genomic_DNA"/>
</dbReference>
<dbReference type="RefSeq" id="WP_009543872.1">
    <property type="nucleotide sequence ID" value="NC_010546.1"/>
</dbReference>
<dbReference type="SMR" id="B1WQT8"/>
<dbReference type="STRING" id="43989.cce_4042"/>
<dbReference type="KEGG" id="cyt:cce_4042"/>
<dbReference type="eggNOG" id="COG0102">
    <property type="taxonomic scope" value="Bacteria"/>
</dbReference>
<dbReference type="HOGENOM" id="CLU_082184_2_2_3"/>
<dbReference type="OrthoDB" id="9801330at2"/>
<dbReference type="Proteomes" id="UP000001203">
    <property type="component" value="Chromosome circular"/>
</dbReference>
<dbReference type="GO" id="GO:0022625">
    <property type="term" value="C:cytosolic large ribosomal subunit"/>
    <property type="evidence" value="ECO:0007669"/>
    <property type="project" value="TreeGrafter"/>
</dbReference>
<dbReference type="GO" id="GO:0003729">
    <property type="term" value="F:mRNA binding"/>
    <property type="evidence" value="ECO:0007669"/>
    <property type="project" value="TreeGrafter"/>
</dbReference>
<dbReference type="GO" id="GO:0003735">
    <property type="term" value="F:structural constituent of ribosome"/>
    <property type="evidence" value="ECO:0007669"/>
    <property type="project" value="InterPro"/>
</dbReference>
<dbReference type="GO" id="GO:0017148">
    <property type="term" value="P:negative regulation of translation"/>
    <property type="evidence" value="ECO:0007669"/>
    <property type="project" value="TreeGrafter"/>
</dbReference>
<dbReference type="GO" id="GO:0006412">
    <property type="term" value="P:translation"/>
    <property type="evidence" value="ECO:0007669"/>
    <property type="project" value="UniProtKB-UniRule"/>
</dbReference>
<dbReference type="CDD" id="cd00392">
    <property type="entry name" value="Ribosomal_L13"/>
    <property type="match status" value="1"/>
</dbReference>
<dbReference type="FunFam" id="3.90.1180.10:FF:000001">
    <property type="entry name" value="50S ribosomal protein L13"/>
    <property type="match status" value="1"/>
</dbReference>
<dbReference type="Gene3D" id="3.90.1180.10">
    <property type="entry name" value="Ribosomal protein L13"/>
    <property type="match status" value="1"/>
</dbReference>
<dbReference type="HAMAP" id="MF_01366">
    <property type="entry name" value="Ribosomal_uL13"/>
    <property type="match status" value="1"/>
</dbReference>
<dbReference type="InterPro" id="IPR005822">
    <property type="entry name" value="Ribosomal_uL13"/>
</dbReference>
<dbReference type="InterPro" id="IPR005823">
    <property type="entry name" value="Ribosomal_uL13_bac-type"/>
</dbReference>
<dbReference type="InterPro" id="IPR023563">
    <property type="entry name" value="Ribosomal_uL13_CS"/>
</dbReference>
<dbReference type="InterPro" id="IPR036899">
    <property type="entry name" value="Ribosomal_uL13_sf"/>
</dbReference>
<dbReference type="NCBIfam" id="TIGR01066">
    <property type="entry name" value="rplM_bact"/>
    <property type="match status" value="1"/>
</dbReference>
<dbReference type="PANTHER" id="PTHR11545:SF2">
    <property type="entry name" value="LARGE RIBOSOMAL SUBUNIT PROTEIN UL13M"/>
    <property type="match status" value="1"/>
</dbReference>
<dbReference type="PANTHER" id="PTHR11545">
    <property type="entry name" value="RIBOSOMAL PROTEIN L13"/>
    <property type="match status" value="1"/>
</dbReference>
<dbReference type="Pfam" id="PF00572">
    <property type="entry name" value="Ribosomal_L13"/>
    <property type="match status" value="1"/>
</dbReference>
<dbReference type="PIRSF" id="PIRSF002181">
    <property type="entry name" value="Ribosomal_L13"/>
    <property type="match status" value="1"/>
</dbReference>
<dbReference type="SUPFAM" id="SSF52161">
    <property type="entry name" value="Ribosomal protein L13"/>
    <property type="match status" value="1"/>
</dbReference>
<dbReference type="PROSITE" id="PS00783">
    <property type="entry name" value="RIBOSOMAL_L13"/>
    <property type="match status" value="1"/>
</dbReference>
<comment type="function">
    <text evidence="1">This protein is one of the early assembly proteins of the 50S ribosomal subunit, although it is not seen to bind rRNA by itself. It is important during the early stages of 50S assembly.</text>
</comment>
<comment type="subunit">
    <text evidence="1">Part of the 50S ribosomal subunit.</text>
</comment>
<comment type="similarity">
    <text evidence="1">Belongs to the universal ribosomal protein uL13 family.</text>
</comment>
<feature type="chain" id="PRO_1000166862" description="Large ribosomal subunit protein uL13">
    <location>
        <begin position="1"/>
        <end position="151"/>
    </location>
</feature>
<feature type="region of interest" description="Disordered" evidence="2">
    <location>
        <begin position="126"/>
        <end position="151"/>
    </location>
</feature>
<feature type="compositionally biased region" description="Polar residues" evidence="2">
    <location>
        <begin position="142"/>
        <end position="151"/>
    </location>
</feature>
<gene>
    <name evidence="1" type="primary">rplM</name>
    <name evidence="1" type="synonym">rpl13</name>
    <name type="ordered locus">cce_4042</name>
</gene>